<comment type="cofactor">
    <cofactor evidence="1">
        <name>FAD</name>
        <dbReference type="ChEBI" id="CHEBI:57692"/>
    </cofactor>
</comment>
<comment type="similarity">
    <text evidence="3">Belongs to the FAD-binding monooxygenase family.</text>
</comment>
<evidence type="ECO:0000250" key="1"/>
<evidence type="ECO:0000255" key="2"/>
<evidence type="ECO:0000305" key="3"/>
<protein>
    <recommendedName>
        <fullName>Uncharacterized monooxygenase Rv0892</fullName>
        <ecNumber>1.14.13.-</ecNumber>
    </recommendedName>
</protein>
<gene>
    <name type="ordered locus">Rv0892</name>
    <name type="ORF">MTCY31.20</name>
</gene>
<organism>
    <name type="scientific">Mycobacterium tuberculosis (strain ATCC 25618 / H37Rv)</name>
    <dbReference type="NCBI Taxonomy" id="83332"/>
    <lineage>
        <taxon>Bacteria</taxon>
        <taxon>Bacillati</taxon>
        <taxon>Actinomycetota</taxon>
        <taxon>Actinomycetes</taxon>
        <taxon>Mycobacteriales</taxon>
        <taxon>Mycobacteriaceae</taxon>
        <taxon>Mycobacterium</taxon>
        <taxon>Mycobacterium tuberculosis complex</taxon>
    </lineage>
</organism>
<name>Y892_MYCTU</name>
<proteinExistence type="evidence at protein level"/>
<feature type="chain" id="PRO_0000186458" description="Uncharacterized monooxygenase Rv0892">
    <location>
        <begin position="1"/>
        <end position="495"/>
    </location>
</feature>
<feature type="binding site" evidence="1">
    <location>
        <position position="16"/>
    </location>
    <ligand>
        <name>FAD</name>
        <dbReference type="ChEBI" id="CHEBI:57692"/>
    </ligand>
</feature>
<feature type="binding site" evidence="1">
    <location>
        <position position="36"/>
    </location>
    <ligand>
        <name>FAD</name>
        <dbReference type="ChEBI" id="CHEBI:57692"/>
    </ligand>
</feature>
<feature type="binding site" evidence="1">
    <location>
        <position position="45"/>
    </location>
    <ligand>
        <name>FAD</name>
        <dbReference type="ChEBI" id="CHEBI:57692"/>
    </ligand>
</feature>
<feature type="binding site" evidence="1">
    <location>
        <position position="56"/>
    </location>
    <ligand>
        <name>FAD</name>
        <dbReference type="ChEBI" id="CHEBI:57692"/>
    </ligand>
</feature>
<feature type="binding site" evidence="1">
    <location>
        <position position="62"/>
    </location>
    <ligand>
        <name>FAD</name>
        <dbReference type="ChEBI" id="CHEBI:57692"/>
    </ligand>
</feature>
<feature type="binding site" evidence="1">
    <location>
        <position position="105"/>
    </location>
    <ligand>
        <name>FAD</name>
        <dbReference type="ChEBI" id="CHEBI:57692"/>
    </ligand>
</feature>
<feature type="site" description="Transition state stabilizer" evidence="2">
    <location>
        <position position="286"/>
    </location>
</feature>
<dbReference type="EC" id="1.14.13.-"/>
<dbReference type="EMBL" id="AL123456">
    <property type="protein sequence ID" value="CCP43640.1"/>
    <property type="molecule type" value="Genomic_DNA"/>
</dbReference>
<dbReference type="PIR" id="A70782">
    <property type="entry name" value="A70782"/>
</dbReference>
<dbReference type="RefSeq" id="NP_215407.1">
    <property type="nucleotide sequence ID" value="NC_000962.3"/>
</dbReference>
<dbReference type="RefSeq" id="WP_003404651.1">
    <property type="nucleotide sequence ID" value="NZ_NVQJ01000001.1"/>
</dbReference>
<dbReference type="SMR" id="P9WNG1"/>
<dbReference type="FunCoup" id="P9WNG1">
    <property type="interactions" value="50"/>
</dbReference>
<dbReference type="STRING" id="83332.Rv0892"/>
<dbReference type="PaxDb" id="83332-Rv0892"/>
<dbReference type="DNASU" id="885225"/>
<dbReference type="GeneID" id="885225"/>
<dbReference type="KEGG" id="mtu:Rv0892"/>
<dbReference type="KEGG" id="mtv:RVBD_0892"/>
<dbReference type="TubercuList" id="Rv0892"/>
<dbReference type="eggNOG" id="COG2072">
    <property type="taxonomic scope" value="Bacteria"/>
</dbReference>
<dbReference type="InParanoid" id="P9WNG1"/>
<dbReference type="OrthoDB" id="5168853at2"/>
<dbReference type="PhylomeDB" id="P9WNG1"/>
<dbReference type="Proteomes" id="UP000001584">
    <property type="component" value="Chromosome"/>
</dbReference>
<dbReference type="GO" id="GO:0009274">
    <property type="term" value="C:peptidoglycan-based cell wall"/>
    <property type="evidence" value="ECO:0007005"/>
    <property type="project" value="MTBBASE"/>
</dbReference>
<dbReference type="GO" id="GO:0050660">
    <property type="term" value="F:flavin adenine dinucleotide binding"/>
    <property type="evidence" value="ECO:0007669"/>
    <property type="project" value="InterPro"/>
</dbReference>
<dbReference type="GO" id="GO:0004499">
    <property type="term" value="F:N,N-dimethylaniline monooxygenase activity"/>
    <property type="evidence" value="ECO:0007669"/>
    <property type="project" value="InterPro"/>
</dbReference>
<dbReference type="GO" id="GO:0050661">
    <property type="term" value="F:NADP binding"/>
    <property type="evidence" value="ECO:0007669"/>
    <property type="project" value="InterPro"/>
</dbReference>
<dbReference type="Gene3D" id="3.50.50.60">
    <property type="entry name" value="FAD/NAD(P)-binding domain"/>
    <property type="match status" value="2"/>
</dbReference>
<dbReference type="InterPro" id="IPR051209">
    <property type="entry name" value="FAD-bind_Monooxygenase_sf"/>
</dbReference>
<dbReference type="InterPro" id="IPR036188">
    <property type="entry name" value="FAD/NAD-bd_sf"/>
</dbReference>
<dbReference type="InterPro" id="IPR020946">
    <property type="entry name" value="Flavin_mOase-like"/>
</dbReference>
<dbReference type="PANTHER" id="PTHR42877:SF4">
    <property type="entry name" value="FAD_NAD(P)-BINDING DOMAIN-CONTAINING PROTEIN-RELATED"/>
    <property type="match status" value="1"/>
</dbReference>
<dbReference type="PANTHER" id="PTHR42877">
    <property type="entry name" value="L-ORNITHINE N(5)-MONOOXYGENASE-RELATED"/>
    <property type="match status" value="1"/>
</dbReference>
<dbReference type="Pfam" id="PF00743">
    <property type="entry name" value="FMO-like"/>
    <property type="match status" value="1"/>
</dbReference>
<dbReference type="PRINTS" id="PR00411">
    <property type="entry name" value="PNDRDTASEI"/>
</dbReference>
<dbReference type="SUPFAM" id="SSF51905">
    <property type="entry name" value="FAD/NAD(P)-binding domain"/>
    <property type="match status" value="2"/>
</dbReference>
<keyword id="KW-0274">FAD</keyword>
<keyword id="KW-0285">Flavoprotein</keyword>
<keyword id="KW-0503">Monooxygenase</keyword>
<keyword id="KW-0521">NADP</keyword>
<keyword id="KW-0560">Oxidoreductase</keyword>
<keyword id="KW-1185">Reference proteome</keyword>
<accession>P9WNG1</accession>
<accession>L0T532</accession>
<accession>P64745</accession>
<accession>Q10532</accession>
<reference key="1">
    <citation type="journal article" date="1998" name="Nature">
        <title>Deciphering the biology of Mycobacterium tuberculosis from the complete genome sequence.</title>
        <authorList>
            <person name="Cole S.T."/>
            <person name="Brosch R."/>
            <person name="Parkhill J."/>
            <person name="Garnier T."/>
            <person name="Churcher C.M."/>
            <person name="Harris D.E."/>
            <person name="Gordon S.V."/>
            <person name="Eiglmeier K."/>
            <person name="Gas S."/>
            <person name="Barry C.E. III"/>
            <person name="Tekaia F."/>
            <person name="Badcock K."/>
            <person name="Basham D."/>
            <person name="Brown D."/>
            <person name="Chillingworth T."/>
            <person name="Connor R."/>
            <person name="Davies R.M."/>
            <person name="Devlin K."/>
            <person name="Feltwell T."/>
            <person name="Gentles S."/>
            <person name="Hamlin N."/>
            <person name="Holroyd S."/>
            <person name="Hornsby T."/>
            <person name="Jagels K."/>
            <person name="Krogh A."/>
            <person name="McLean J."/>
            <person name="Moule S."/>
            <person name="Murphy L.D."/>
            <person name="Oliver S."/>
            <person name="Osborne J."/>
            <person name="Quail M.A."/>
            <person name="Rajandream M.A."/>
            <person name="Rogers J."/>
            <person name="Rutter S."/>
            <person name="Seeger K."/>
            <person name="Skelton S."/>
            <person name="Squares S."/>
            <person name="Squares R."/>
            <person name="Sulston J.E."/>
            <person name="Taylor K."/>
            <person name="Whitehead S."/>
            <person name="Barrell B.G."/>
        </authorList>
    </citation>
    <scope>NUCLEOTIDE SEQUENCE [LARGE SCALE GENOMIC DNA]</scope>
    <source>
        <strain>ATCC 25618 / H37Rv</strain>
    </source>
</reference>
<reference key="2">
    <citation type="journal article" date="2011" name="Mol. Cell. Proteomics">
        <title>Proteogenomic analysis of Mycobacterium tuberculosis by high resolution mass spectrometry.</title>
        <authorList>
            <person name="Kelkar D.S."/>
            <person name="Kumar D."/>
            <person name="Kumar P."/>
            <person name="Balakrishnan L."/>
            <person name="Muthusamy B."/>
            <person name="Yadav A.K."/>
            <person name="Shrivastava P."/>
            <person name="Marimuthu A."/>
            <person name="Anand S."/>
            <person name="Sundaram H."/>
            <person name="Kingsbury R."/>
            <person name="Harsha H.C."/>
            <person name="Nair B."/>
            <person name="Prasad T.S."/>
            <person name="Chauhan D.S."/>
            <person name="Katoch K."/>
            <person name="Katoch V.M."/>
            <person name="Kumar P."/>
            <person name="Chaerkady R."/>
            <person name="Ramachandran S."/>
            <person name="Dash D."/>
            <person name="Pandey A."/>
        </authorList>
    </citation>
    <scope>IDENTIFICATION BY MASS SPECTROMETRY [LARGE SCALE ANALYSIS]</scope>
    <source>
        <strain>ATCC 25618 / H37Rv</strain>
    </source>
</reference>
<sequence length="495" mass="55039">MTGRCPTVAVVGAGMSGMCVAITLLSAGITDVCIYEKADDVGGTWRDNTYPGLTCDVPSRLYQYSFAKNPNWTQMFSRGGEIQDYLRGIAERYGLRHRIRFGATVVSARFDDGRWVLRTDSGTESTVDFLISATGVLHHPRIPPIAGLDDFRGTVFHSARWDHTVPLLGRRIAVIGTGSTGVQLVCGLAGVAGKVTMFQRTAQWVLPWPNPRYSKLARVFHRAFPCLGSLAYKAYSLSFETFAVALSNPGLHRKLVGAVCRASLRRVRDPRLRRALTPDYEPMCKRLVMSGGFYRAIQRDDVELVTAGIDHVEHRGIVTDDGVLHEVDVIVLATGFDSHAFFRPMQLTGRDGIRIDDVWQDGPHAHQTVAIPGFPNFFMMLGPHSPVGNFPLTAVAESQAEHIVQWIKRWRHGEFDTMEPKSAATEAYNTVLRAAMPNTVWTTGCDSWYLNKDGIPEVWPFAPAKHRAMLANLHPEEYDLRRYAAVRATSRPQSA</sequence>